<keyword id="KW-0963">Cytoplasm</keyword>
<keyword id="KW-0238">DNA-binding</keyword>
<sequence length="108" mass="11768">MLKGNLAGLMKQAQQMQENMKKMQEQLAQIEVEGQSGAGLVKVTMTCRNEVRRVAIDPSLLADDKDMLEDLVAAAFNDAVRKAEATSQEKMSGMTSGLPLPPGFKLPF</sequence>
<protein>
    <recommendedName>
        <fullName evidence="1">Nucleoid-associated protein Bcep1808_1753</fullName>
    </recommendedName>
</protein>
<reference key="1">
    <citation type="submission" date="2007-03" db="EMBL/GenBank/DDBJ databases">
        <title>Complete sequence of chromosome 1 of Burkholderia vietnamiensis G4.</title>
        <authorList>
            <consortium name="US DOE Joint Genome Institute"/>
            <person name="Copeland A."/>
            <person name="Lucas S."/>
            <person name="Lapidus A."/>
            <person name="Barry K."/>
            <person name="Detter J.C."/>
            <person name="Glavina del Rio T."/>
            <person name="Hammon N."/>
            <person name="Israni S."/>
            <person name="Dalin E."/>
            <person name="Tice H."/>
            <person name="Pitluck S."/>
            <person name="Chain P."/>
            <person name="Malfatti S."/>
            <person name="Shin M."/>
            <person name="Vergez L."/>
            <person name="Schmutz J."/>
            <person name="Larimer F."/>
            <person name="Land M."/>
            <person name="Hauser L."/>
            <person name="Kyrpides N."/>
            <person name="Tiedje J."/>
            <person name="Richardson P."/>
        </authorList>
    </citation>
    <scope>NUCLEOTIDE SEQUENCE [LARGE SCALE GENOMIC DNA]</scope>
    <source>
        <strain>G4 / LMG 22486</strain>
    </source>
</reference>
<proteinExistence type="inferred from homology"/>
<gene>
    <name type="ordered locus">Bcep1808_1753</name>
</gene>
<dbReference type="EMBL" id="CP000614">
    <property type="protein sequence ID" value="ABO54757.1"/>
    <property type="molecule type" value="Genomic_DNA"/>
</dbReference>
<dbReference type="SMR" id="A4JEQ4"/>
<dbReference type="KEGG" id="bvi:Bcep1808_1753"/>
<dbReference type="eggNOG" id="COG0718">
    <property type="taxonomic scope" value="Bacteria"/>
</dbReference>
<dbReference type="HOGENOM" id="CLU_140930_0_0_4"/>
<dbReference type="Proteomes" id="UP000002287">
    <property type="component" value="Chromosome 1"/>
</dbReference>
<dbReference type="GO" id="GO:0043590">
    <property type="term" value="C:bacterial nucleoid"/>
    <property type="evidence" value="ECO:0007669"/>
    <property type="project" value="UniProtKB-UniRule"/>
</dbReference>
<dbReference type="GO" id="GO:0005829">
    <property type="term" value="C:cytosol"/>
    <property type="evidence" value="ECO:0007669"/>
    <property type="project" value="TreeGrafter"/>
</dbReference>
<dbReference type="GO" id="GO:0003677">
    <property type="term" value="F:DNA binding"/>
    <property type="evidence" value="ECO:0007669"/>
    <property type="project" value="UniProtKB-UniRule"/>
</dbReference>
<dbReference type="FunFam" id="3.30.1310.10:FF:000001">
    <property type="entry name" value="Nucleoid-associated protein YbaB"/>
    <property type="match status" value="1"/>
</dbReference>
<dbReference type="Gene3D" id="3.30.1310.10">
    <property type="entry name" value="Nucleoid-associated protein YbaB-like domain"/>
    <property type="match status" value="1"/>
</dbReference>
<dbReference type="HAMAP" id="MF_00274">
    <property type="entry name" value="DNA_YbaB_EbfC"/>
    <property type="match status" value="1"/>
</dbReference>
<dbReference type="InterPro" id="IPR036894">
    <property type="entry name" value="YbaB-like_sf"/>
</dbReference>
<dbReference type="InterPro" id="IPR004401">
    <property type="entry name" value="YbaB/EbfC"/>
</dbReference>
<dbReference type="NCBIfam" id="TIGR00103">
    <property type="entry name" value="DNA_YbaB_EbfC"/>
    <property type="match status" value="1"/>
</dbReference>
<dbReference type="PANTHER" id="PTHR33449">
    <property type="entry name" value="NUCLEOID-ASSOCIATED PROTEIN YBAB"/>
    <property type="match status" value="1"/>
</dbReference>
<dbReference type="PANTHER" id="PTHR33449:SF1">
    <property type="entry name" value="NUCLEOID-ASSOCIATED PROTEIN YBAB"/>
    <property type="match status" value="1"/>
</dbReference>
<dbReference type="Pfam" id="PF02575">
    <property type="entry name" value="YbaB_DNA_bd"/>
    <property type="match status" value="1"/>
</dbReference>
<dbReference type="PIRSF" id="PIRSF004555">
    <property type="entry name" value="UCP004555"/>
    <property type="match status" value="1"/>
</dbReference>
<dbReference type="SUPFAM" id="SSF82607">
    <property type="entry name" value="YbaB-like"/>
    <property type="match status" value="1"/>
</dbReference>
<accession>A4JEQ4</accession>
<evidence type="ECO:0000255" key="1">
    <source>
        <dbReference type="HAMAP-Rule" id="MF_00274"/>
    </source>
</evidence>
<evidence type="ECO:0000256" key="2">
    <source>
        <dbReference type="SAM" id="MobiDB-lite"/>
    </source>
</evidence>
<comment type="function">
    <text evidence="1">Binds to DNA and alters its conformation. May be involved in regulation of gene expression, nucleoid organization and DNA protection.</text>
</comment>
<comment type="subunit">
    <text evidence="1">Homodimer.</text>
</comment>
<comment type="subcellular location">
    <subcellularLocation>
        <location evidence="1">Cytoplasm</location>
        <location evidence="1">Nucleoid</location>
    </subcellularLocation>
</comment>
<comment type="similarity">
    <text evidence="1">Belongs to the YbaB/EbfC family.</text>
</comment>
<name>Y1753_BURVG</name>
<feature type="chain" id="PRO_1000003712" description="Nucleoid-associated protein Bcep1808_1753">
    <location>
        <begin position="1"/>
        <end position="108"/>
    </location>
</feature>
<feature type="region of interest" description="Disordered" evidence="2">
    <location>
        <begin position="85"/>
        <end position="108"/>
    </location>
</feature>
<feature type="compositionally biased region" description="Polar residues" evidence="2">
    <location>
        <begin position="85"/>
        <end position="95"/>
    </location>
</feature>
<feature type="compositionally biased region" description="Pro residues" evidence="2">
    <location>
        <begin position="99"/>
        <end position="108"/>
    </location>
</feature>
<organism>
    <name type="scientific">Burkholderia vietnamiensis (strain G4 / LMG 22486)</name>
    <name type="common">Burkholderia cepacia (strain R1808)</name>
    <dbReference type="NCBI Taxonomy" id="269482"/>
    <lineage>
        <taxon>Bacteria</taxon>
        <taxon>Pseudomonadati</taxon>
        <taxon>Pseudomonadota</taxon>
        <taxon>Betaproteobacteria</taxon>
        <taxon>Burkholderiales</taxon>
        <taxon>Burkholderiaceae</taxon>
        <taxon>Burkholderia</taxon>
        <taxon>Burkholderia cepacia complex</taxon>
    </lineage>
</organism>